<reference key="1">
    <citation type="journal article" date="1997" name="Nat. Genet.">
        <title>The mitochondrial genome of Arabidopsis thaliana contains 57 genes in 366,924 nucleotides.</title>
        <authorList>
            <person name="Unseld M."/>
            <person name="Marienfeld J.R."/>
            <person name="Brandt P."/>
            <person name="Brennicke A."/>
        </authorList>
    </citation>
    <scope>NUCLEOTIDE SEQUENCE [LARGE SCALE GENOMIC DNA]</scope>
    <source>
        <strain>cv. C24</strain>
    </source>
</reference>
<reference key="2">
    <citation type="journal article" date="2018" name="Plant Cell">
        <title>Correction of persistent errors in Arabidopsis reference mitochondrial genomes.</title>
        <authorList>
            <person name="Sloan D.B."/>
            <person name="Wu Z."/>
            <person name="Sharbrough J."/>
        </authorList>
    </citation>
    <scope>NUCLEOTIDE SEQUENCE [LARGE SCALE GENOMIC DNA]</scope>
    <source>
        <strain>cv. Columbia</strain>
    </source>
</reference>
<protein>
    <recommendedName>
        <fullName>Uncharacterized mitochondrial protein AtMg00050</fullName>
    </recommendedName>
    <alternativeName>
        <fullName>ORF131</fullName>
    </alternativeName>
</protein>
<keyword id="KW-0496">Mitochondrion</keyword>
<keyword id="KW-1185">Reference proteome</keyword>
<organism>
    <name type="scientific">Arabidopsis thaliana</name>
    <name type="common">Mouse-ear cress</name>
    <dbReference type="NCBI Taxonomy" id="3702"/>
    <lineage>
        <taxon>Eukaryota</taxon>
        <taxon>Viridiplantae</taxon>
        <taxon>Streptophyta</taxon>
        <taxon>Embryophyta</taxon>
        <taxon>Tracheophyta</taxon>
        <taxon>Spermatophyta</taxon>
        <taxon>Magnoliopsida</taxon>
        <taxon>eudicotyledons</taxon>
        <taxon>Gunneridae</taxon>
        <taxon>Pentapetalae</taxon>
        <taxon>rosids</taxon>
        <taxon>malvids</taxon>
        <taxon>Brassicales</taxon>
        <taxon>Brassicaceae</taxon>
        <taxon>Camelineae</taxon>
        <taxon>Arabidopsis</taxon>
    </lineage>
</organism>
<accession>P93277</accession>
<dbReference type="EMBL" id="Y08501">
    <property type="protein sequence ID" value="CAA69781.1"/>
    <property type="molecule type" value="Genomic_DNA"/>
</dbReference>
<dbReference type="EMBL" id="BK010421">
    <property type="status" value="NOT_ANNOTATED_CDS"/>
    <property type="molecule type" value="Genomic_DNA"/>
</dbReference>
<dbReference type="RefSeq" id="NP_085477.1">
    <property type="nucleotide sequence ID" value="NC_001284.2"/>
</dbReference>
<dbReference type="STRING" id="3702.P93277"/>
<dbReference type="PaxDb" id="3702-ATMG00050.1"/>
<dbReference type="EnsemblPlants" id="ATMG00050.1">
    <property type="protein sequence ID" value="ATMG00050.1"/>
    <property type="gene ID" value="ATMG00050"/>
</dbReference>
<dbReference type="Gramene" id="ATMG00050.1">
    <property type="protein sequence ID" value="ATMG00050.1"/>
    <property type="gene ID" value="ATMG00050"/>
</dbReference>
<dbReference type="Araport" id="ATMG00050"/>
<dbReference type="TAIR" id="ATMG00050">
    <property type="gene designation" value="ORF131"/>
</dbReference>
<dbReference type="HOGENOM" id="CLU_1930426_0_0_1"/>
<dbReference type="InParanoid" id="P93277"/>
<dbReference type="PRO" id="PR:P93277"/>
<dbReference type="Proteomes" id="UP000006548">
    <property type="component" value="Mitochondrion MT"/>
</dbReference>
<dbReference type="GO" id="GO:0005739">
    <property type="term" value="C:mitochondrion"/>
    <property type="evidence" value="ECO:0007669"/>
    <property type="project" value="UniProtKB-SubCell"/>
</dbReference>
<geneLocation type="mitochondrion"/>
<gene>
    <name type="ordered locus">AtMg00050</name>
</gene>
<name>M050_ARATH</name>
<sequence length="131" mass="14565">MSGVYLTVPQAPELINERIPSFTASCSEVAPEHSEMPLTVIYIVLPVVMESQLESTLDILWIPESYSTLMQENMGFPYHGRLQILAGARDSLYLGRDAVVLLCPSLPFPTFTKWLIQVILLLSYWGSGGFG</sequence>
<feature type="chain" id="PRO_0000196754" description="Uncharacterized mitochondrial protein AtMg00050">
    <location>
        <begin position="1"/>
        <end position="131"/>
    </location>
</feature>
<proteinExistence type="predicted"/>
<comment type="subcellular location">
    <subcellularLocation>
        <location evidence="1">Mitochondrion</location>
    </subcellularLocation>
</comment>
<evidence type="ECO:0000305" key="1"/>